<proteinExistence type="inferred from homology"/>
<gene>
    <name evidence="1" type="primary">rsmG</name>
    <name type="ordered locus">Cphy_3939</name>
</gene>
<protein>
    <recommendedName>
        <fullName evidence="1">Ribosomal RNA small subunit methyltransferase G</fullName>
        <ecNumber evidence="1">2.1.1.-</ecNumber>
    </recommendedName>
    <alternativeName>
        <fullName evidence="1">16S rRNA 7-methylguanosine methyltransferase</fullName>
        <shortName evidence="1">16S rRNA m7G methyltransferase</shortName>
    </alternativeName>
</protein>
<comment type="function">
    <text evidence="1">Specifically methylates the N7 position of a guanine in 16S rRNA.</text>
</comment>
<comment type="subcellular location">
    <subcellularLocation>
        <location evidence="1">Cytoplasm</location>
    </subcellularLocation>
</comment>
<comment type="similarity">
    <text evidence="1">Belongs to the methyltransferase superfamily. RNA methyltransferase RsmG family.</text>
</comment>
<evidence type="ECO:0000255" key="1">
    <source>
        <dbReference type="HAMAP-Rule" id="MF_00074"/>
    </source>
</evidence>
<organism>
    <name type="scientific">Lachnoclostridium phytofermentans (strain ATCC 700394 / DSM 18823 / ISDg)</name>
    <name type="common">Clostridium phytofermentans</name>
    <dbReference type="NCBI Taxonomy" id="357809"/>
    <lineage>
        <taxon>Bacteria</taxon>
        <taxon>Bacillati</taxon>
        <taxon>Bacillota</taxon>
        <taxon>Clostridia</taxon>
        <taxon>Lachnospirales</taxon>
        <taxon>Lachnospiraceae</taxon>
    </lineage>
</organism>
<dbReference type="EC" id="2.1.1.-" evidence="1"/>
<dbReference type="EMBL" id="CP000885">
    <property type="protein sequence ID" value="ABX44286.1"/>
    <property type="molecule type" value="Genomic_DNA"/>
</dbReference>
<dbReference type="RefSeq" id="WP_012201933.1">
    <property type="nucleotide sequence ID" value="NC_010001.1"/>
</dbReference>
<dbReference type="SMR" id="A9KLX7"/>
<dbReference type="STRING" id="357809.Cphy_3939"/>
<dbReference type="KEGG" id="cpy:Cphy_3939"/>
<dbReference type="eggNOG" id="COG0357">
    <property type="taxonomic scope" value="Bacteria"/>
</dbReference>
<dbReference type="HOGENOM" id="CLU_065341_0_0_9"/>
<dbReference type="OrthoDB" id="9808773at2"/>
<dbReference type="Proteomes" id="UP000000370">
    <property type="component" value="Chromosome"/>
</dbReference>
<dbReference type="GO" id="GO:0005829">
    <property type="term" value="C:cytosol"/>
    <property type="evidence" value="ECO:0007669"/>
    <property type="project" value="TreeGrafter"/>
</dbReference>
<dbReference type="GO" id="GO:0070043">
    <property type="term" value="F:rRNA (guanine-N7-)-methyltransferase activity"/>
    <property type="evidence" value="ECO:0007669"/>
    <property type="project" value="UniProtKB-UniRule"/>
</dbReference>
<dbReference type="FunFam" id="3.40.50.150:FF:000041">
    <property type="entry name" value="Ribosomal RNA small subunit methyltransferase G"/>
    <property type="match status" value="1"/>
</dbReference>
<dbReference type="Gene3D" id="3.40.50.150">
    <property type="entry name" value="Vaccinia Virus protein VP39"/>
    <property type="match status" value="1"/>
</dbReference>
<dbReference type="HAMAP" id="MF_00074">
    <property type="entry name" value="16SrRNA_methyltr_G"/>
    <property type="match status" value="1"/>
</dbReference>
<dbReference type="InterPro" id="IPR003682">
    <property type="entry name" value="rRNA_ssu_MeTfrase_G"/>
</dbReference>
<dbReference type="InterPro" id="IPR029063">
    <property type="entry name" value="SAM-dependent_MTases_sf"/>
</dbReference>
<dbReference type="NCBIfam" id="TIGR00138">
    <property type="entry name" value="rsmG_gidB"/>
    <property type="match status" value="1"/>
</dbReference>
<dbReference type="PANTHER" id="PTHR31760">
    <property type="entry name" value="S-ADENOSYL-L-METHIONINE-DEPENDENT METHYLTRANSFERASES SUPERFAMILY PROTEIN"/>
    <property type="match status" value="1"/>
</dbReference>
<dbReference type="PANTHER" id="PTHR31760:SF0">
    <property type="entry name" value="S-ADENOSYL-L-METHIONINE-DEPENDENT METHYLTRANSFERASES SUPERFAMILY PROTEIN"/>
    <property type="match status" value="1"/>
</dbReference>
<dbReference type="Pfam" id="PF02527">
    <property type="entry name" value="GidB"/>
    <property type="match status" value="1"/>
</dbReference>
<dbReference type="PIRSF" id="PIRSF003078">
    <property type="entry name" value="GidB"/>
    <property type="match status" value="1"/>
</dbReference>
<dbReference type="SUPFAM" id="SSF53335">
    <property type="entry name" value="S-adenosyl-L-methionine-dependent methyltransferases"/>
    <property type="match status" value="1"/>
</dbReference>
<reference key="1">
    <citation type="submission" date="2007-11" db="EMBL/GenBank/DDBJ databases">
        <title>Complete genome sequence of Clostridium phytofermentans ISDg.</title>
        <authorList>
            <person name="Leschine S.B."/>
            <person name="Warnick T.A."/>
            <person name="Blanchard J.L."/>
            <person name="Schnell D.J."/>
            <person name="Petit E.L."/>
            <person name="LaTouf W.G."/>
            <person name="Copeland A."/>
            <person name="Lucas S."/>
            <person name="Lapidus A."/>
            <person name="Barry K."/>
            <person name="Glavina del Rio T."/>
            <person name="Dalin E."/>
            <person name="Tice H."/>
            <person name="Pitluck S."/>
            <person name="Kiss H."/>
            <person name="Brettin T."/>
            <person name="Bruce D."/>
            <person name="Detter J.C."/>
            <person name="Han C."/>
            <person name="Kuske C."/>
            <person name="Schmutz J."/>
            <person name="Larimer F."/>
            <person name="Land M."/>
            <person name="Hauser L."/>
            <person name="Kyrpides N."/>
            <person name="Kim E.A."/>
            <person name="Richardson P."/>
        </authorList>
    </citation>
    <scope>NUCLEOTIDE SEQUENCE [LARGE SCALE GENOMIC DNA]</scope>
    <source>
        <strain>ATCC 700394 / DSM 18823 / ISDg</strain>
    </source>
</reference>
<sequence length="242" mass="27664">MRDNSTFIQGLRSLGMDLNKHQLEQFEIYYDLLIEWNSFMNLTAITEYEEVIQKHFLDSLSLIKSYQIKTGDTLLDMGTGAGFPGIPLKIAYPDLNVLLMDSLNKRINFLNEVINRLELKNISAMHGRAEEQARKLDFREKFDIVVSRAVARTASLAELCLPYVKKGGYFIPYKSGKVTEELEEAEYALECLGGKLEEKVTFSLPDTDMERTLICIKKVKETPKSYPRAGGKPLKMPLIRKK</sequence>
<accession>A9KLX7</accession>
<keyword id="KW-0963">Cytoplasm</keyword>
<keyword id="KW-0489">Methyltransferase</keyword>
<keyword id="KW-1185">Reference proteome</keyword>
<keyword id="KW-0698">rRNA processing</keyword>
<keyword id="KW-0949">S-adenosyl-L-methionine</keyword>
<keyword id="KW-0808">Transferase</keyword>
<name>RSMG_LACP7</name>
<feature type="chain" id="PRO_0000335337" description="Ribosomal RNA small subunit methyltransferase G">
    <location>
        <begin position="1"/>
        <end position="242"/>
    </location>
</feature>
<feature type="binding site" evidence="1">
    <location>
        <position position="78"/>
    </location>
    <ligand>
        <name>S-adenosyl-L-methionine</name>
        <dbReference type="ChEBI" id="CHEBI:59789"/>
    </ligand>
</feature>
<feature type="binding site" evidence="1">
    <location>
        <position position="83"/>
    </location>
    <ligand>
        <name>S-adenosyl-L-methionine</name>
        <dbReference type="ChEBI" id="CHEBI:59789"/>
    </ligand>
</feature>
<feature type="binding site" evidence="1">
    <location>
        <begin position="129"/>
        <end position="130"/>
    </location>
    <ligand>
        <name>S-adenosyl-L-methionine</name>
        <dbReference type="ChEBI" id="CHEBI:59789"/>
    </ligand>
</feature>
<feature type="binding site" evidence="1">
    <location>
        <position position="148"/>
    </location>
    <ligand>
        <name>S-adenosyl-L-methionine</name>
        <dbReference type="ChEBI" id="CHEBI:59789"/>
    </ligand>
</feature>